<gene>
    <name evidence="1" type="primary">pstB3</name>
    <name type="ordered locus">SAK_1924</name>
</gene>
<accession>Q3JYY5</accession>
<comment type="function">
    <text evidence="1">Part of the ABC transporter complex PstSACB involved in phosphate import. Responsible for energy coupling to the transport system.</text>
</comment>
<comment type="catalytic activity">
    <reaction evidence="1">
        <text>phosphate(out) + ATP + H2O = ADP + 2 phosphate(in) + H(+)</text>
        <dbReference type="Rhea" id="RHEA:24440"/>
        <dbReference type="ChEBI" id="CHEBI:15377"/>
        <dbReference type="ChEBI" id="CHEBI:15378"/>
        <dbReference type="ChEBI" id="CHEBI:30616"/>
        <dbReference type="ChEBI" id="CHEBI:43474"/>
        <dbReference type="ChEBI" id="CHEBI:456216"/>
        <dbReference type="EC" id="7.3.2.1"/>
    </reaction>
</comment>
<comment type="subunit">
    <text evidence="1">The complex is composed of two ATP-binding proteins (PstB), two transmembrane proteins (PstC and PstA) and a solute-binding protein (PstS).</text>
</comment>
<comment type="subcellular location">
    <subcellularLocation>
        <location evidence="1">Cell membrane</location>
        <topology evidence="1">Peripheral membrane protein</topology>
    </subcellularLocation>
</comment>
<comment type="similarity">
    <text evidence="1">Belongs to the ABC transporter superfamily. Phosphate importer (TC 3.A.1.7) family.</text>
</comment>
<sequence length="249" mass="28107">MSKLVINNLDLYYGEFHALKDVNLDIEEKEITAFIGPSGCGKSTLLKSINRMNDLVKNCKITGDITLEGEDVYRQLDINQLRKKVGMVFQKPNPFPMSIYDNVAFGPRTHGIHSKAELDDIVERSLKQAALWDEVKDRLHKSALGMSGGQQQRLCIARALAIEPDVLLMDEPTSALDPISTAKIEELVIQLKKNYTIVIVTHNMQQAVRISDKTAFFLMGEVVEYNKTCQLFSLPQDERTENYITGRFG</sequence>
<evidence type="ECO:0000255" key="1">
    <source>
        <dbReference type="HAMAP-Rule" id="MF_01702"/>
    </source>
</evidence>
<dbReference type="EC" id="7.3.2.1" evidence="1"/>
<dbReference type="EMBL" id="CP000114">
    <property type="protein sequence ID" value="ABA45847.1"/>
    <property type="molecule type" value="Genomic_DNA"/>
</dbReference>
<dbReference type="SMR" id="Q3JYY5"/>
<dbReference type="KEGG" id="sak:SAK_1924"/>
<dbReference type="HOGENOM" id="CLU_000604_1_22_9"/>
<dbReference type="GO" id="GO:0005886">
    <property type="term" value="C:plasma membrane"/>
    <property type="evidence" value="ECO:0007669"/>
    <property type="project" value="UniProtKB-SubCell"/>
</dbReference>
<dbReference type="GO" id="GO:0005524">
    <property type="term" value="F:ATP binding"/>
    <property type="evidence" value="ECO:0007669"/>
    <property type="project" value="UniProtKB-KW"/>
</dbReference>
<dbReference type="GO" id="GO:0016887">
    <property type="term" value="F:ATP hydrolysis activity"/>
    <property type="evidence" value="ECO:0007669"/>
    <property type="project" value="InterPro"/>
</dbReference>
<dbReference type="GO" id="GO:0015415">
    <property type="term" value="F:ATPase-coupled phosphate ion transmembrane transporter activity"/>
    <property type="evidence" value="ECO:0007669"/>
    <property type="project" value="UniProtKB-EC"/>
</dbReference>
<dbReference type="GO" id="GO:0035435">
    <property type="term" value="P:phosphate ion transmembrane transport"/>
    <property type="evidence" value="ECO:0007669"/>
    <property type="project" value="InterPro"/>
</dbReference>
<dbReference type="CDD" id="cd03260">
    <property type="entry name" value="ABC_PstB_phosphate_transporter"/>
    <property type="match status" value="1"/>
</dbReference>
<dbReference type="FunFam" id="3.40.50.300:FF:000132">
    <property type="entry name" value="Phosphate import ATP-binding protein PstB"/>
    <property type="match status" value="1"/>
</dbReference>
<dbReference type="Gene3D" id="3.40.50.300">
    <property type="entry name" value="P-loop containing nucleotide triphosphate hydrolases"/>
    <property type="match status" value="1"/>
</dbReference>
<dbReference type="InterPro" id="IPR003593">
    <property type="entry name" value="AAA+_ATPase"/>
</dbReference>
<dbReference type="InterPro" id="IPR003439">
    <property type="entry name" value="ABC_transporter-like_ATP-bd"/>
</dbReference>
<dbReference type="InterPro" id="IPR017871">
    <property type="entry name" value="ABC_transporter-like_CS"/>
</dbReference>
<dbReference type="InterPro" id="IPR027417">
    <property type="entry name" value="P-loop_NTPase"/>
</dbReference>
<dbReference type="InterPro" id="IPR005670">
    <property type="entry name" value="PstB-like"/>
</dbReference>
<dbReference type="NCBIfam" id="TIGR00972">
    <property type="entry name" value="3a0107s01c2"/>
    <property type="match status" value="1"/>
</dbReference>
<dbReference type="PANTHER" id="PTHR43423">
    <property type="entry name" value="ABC TRANSPORTER I FAMILY MEMBER 17"/>
    <property type="match status" value="1"/>
</dbReference>
<dbReference type="PANTHER" id="PTHR43423:SF1">
    <property type="entry name" value="ABC TRANSPORTER I FAMILY MEMBER 17"/>
    <property type="match status" value="1"/>
</dbReference>
<dbReference type="Pfam" id="PF00005">
    <property type="entry name" value="ABC_tran"/>
    <property type="match status" value="1"/>
</dbReference>
<dbReference type="SMART" id="SM00382">
    <property type="entry name" value="AAA"/>
    <property type="match status" value="1"/>
</dbReference>
<dbReference type="SUPFAM" id="SSF52540">
    <property type="entry name" value="P-loop containing nucleoside triphosphate hydrolases"/>
    <property type="match status" value="1"/>
</dbReference>
<dbReference type="PROSITE" id="PS00211">
    <property type="entry name" value="ABC_TRANSPORTER_1"/>
    <property type="match status" value="1"/>
</dbReference>
<dbReference type="PROSITE" id="PS50893">
    <property type="entry name" value="ABC_TRANSPORTER_2"/>
    <property type="match status" value="1"/>
</dbReference>
<dbReference type="PROSITE" id="PS51238">
    <property type="entry name" value="PSTB"/>
    <property type="match status" value="1"/>
</dbReference>
<organism>
    <name type="scientific">Streptococcus agalactiae serotype Ia (strain ATCC 27591 / A909 / CDC SS700)</name>
    <dbReference type="NCBI Taxonomy" id="205921"/>
    <lineage>
        <taxon>Bacteria</taxon>
        <taxon>Bacillati</taxon>
        <taxon>Bacillota</taxon>
        <taxon>Bacilli</taxon>
        <taxon>Lactobacillales</taxon>
        <taxon>Streptococcaceae</taxon>
        <taxon>Streptococcus</taxon>
    </lineage>
</organism>
<protein>
    <recommendedName>
        <fullName evidence="1">Phosphate import ATP-binding protein PstB 3</fullName>
        <ecNumber evidence="1">7.3.2.1</ecNumber>
    </recommendedName>
    <alternativeName>
        <fullName evidence="1">ABC phosphate transporter 3</fullName>
    </alternativeName>
    <alternativeName>
        <fullName evidence="1">Phosphate-transporting ATPase 3</fullName>
    </alternativeName>
</protein>
<feature type="chain" id="PRO_0000272540" description="Phosphate import ATP-binding protein PstB 3">
    <location>
        <begin position="1"/>
        <end position="249"/>
    </location>
</feature>
<feature type="domain" description="ABC transporter" evidence="1">
    <location>
        <begin position="4"/>
        <end position="244"/>
    </location>
</feature>
<feature type="binding site" evidence="1">
    <location>
        <begin position="36"/>
        <end position="43"/>
    </location>
    <ligand>
        <name>ATP</name>
        <dbReference type="ChEBI" id="CHEBI:30616"/>
    </ligand>
</feature>
<reference key="1">
    <citation type="journal article" date="2005" name="Proc. Natl. Acad. Sci. U.S.A.">
        <title>Genome analysis of multiple pathogenic isolates of Streptococcus agalactiae: implications for the microbial 'pan-genome'.</title>
        <authorList>
            <person name="Tettelin H."/>
            <person name="Masignani V."/>
            <person name="Cieslewicz M.J."/>
            <person name="Donati C."/>
            <person name="Medini D."/>
            <person name="Ward N.L."/>
            <person name="Angiuoli S.V."/>
            <person name="Crabtree J."/>
            <person name="Jones A.L."/>
            <person name="Durkin A.S."/>
            <person name="DeBoy R.T."/>
            <person name="Davidsen T.M."/>
            <person name="Mora M."/>
            <person name="Scarselli M."/>
            <person name="Margarit y Ros I."/>
            <person name="Peterson J.D."/>
            <person name="Hauser C.R."/>
            <person name="Sundaram J.P."/>
            <person name="Nelson W.C."/>
            <person name="Madupu R."/>
            <person name="Brinkac L.M."/>
            <person name="Dodson R.J."/>
            <person name="Rosovitz M.J."/>
            <person name="Sullivan S.A."/>
            <person name="Daugherty S.C."/>
            <person name="Haft D.H."/>
            <person name="Selengut J."/>
            <person name="Gwinn M.L."/>
            <person name="Zhou L."/>
            <person name="Zafar N."/>
            <person name="Khouri H."/>
            <person name="Radune D."/>
            <person name="Dimitrov G."/>
            <person name="Watkins K."/>
            <person name="O'Connor K.J."/>
            <person name="Smith S."/>
            <person name="Utterback T.R."/>
            <person name="White O."/>
            <person name="Rubens C.E."/>
            <person name="Grandi G."/>
            <person name="Madoff L.C."/>
            <person name="Kasper D.L."/>
            <person name="Telford J.L."/>
            <person name="Wessels M.R."/>
            <person name="Rappuoli R."/>
            <person name="Fraser C.M."/>
        </authorList>
    </citation>
    <scope>NUCLEOTIDE SEQUENCE [LARGE SCALE GENOMIC DNA]</scope>
    <source>
        <strain>ATCC 27591 / A909 / CDC SS700</strain>
    </source>
</reference>
<proteinExistence type="inferred from homology"/>
<keyword id="KW-0067">ATP-binding</keyword>
<keyword id="KW-1003">Cell membrane</keyword>
<keyword id="KW-0472">Membrane</keyword>
<keyword id="KW-0547">Nucleotide-binding</keyword>
<keyword id="KW-0592">Phosphate transport</keyword>
<keyword id="KW-1278">Translocase</keyword>
<keyword id="KW-0813">Transport</keyword>
<name>PSTB3_STRA1</name>